<protein>
    <recommendedName>
        <fullName evidence="1">Small ribosomal subunit protein uS5</fullName>
    </recommendedName>
    <alternativeName>
        <fullName evidence="2">30S ribosomal protein S5</fullName>
    </alternativeName>
</protein>
<feature type="chain" id="PRO_1000140900" description="Small ribosomal subunit protein uS5">
    <location>
        <begin position="1"/>
        <end position="167"/>
    </location>
</feature>
<feature type="domain" description="S5 DRBM" evidence="1">
    <location>
        <begin position="11"/>
        <end position="75"/>
    </location>
</feature>
<sequence>MARVDWTKLDLKERVVSINRVSKVVKGGKNFRFSVTVVVGDAERGYVGVGRGKAAEIPDAIRKAIEDAKKHLIKVPIVGTTIPHEVIGEFGAGKVLLKPAREGTGVIAGGPVRAVLESAGIKDVLTKSLGSSNATNMVYATIEGLKRLRTAEDVAKLRGIPVSQLFE</sequence>
<organism>
    <name type="scientific">Thermoanaerobacter sp. (strain X514)</name>
    <dbReference type="NCBI Taxonomy" id="399726"/>
    <lineage>
        <taxon>Bacteria</taxon>
        <taxon>Bacillati</taxon>
        <taxon>Bacillota</taxon>
        <taxon>Clostridia</taxon>
        <taxon>Thermoanaerobacterales</taxon>
        <taxon>Thermoanaerobacteraceae</taxon>
        <taxon>Thermoanaerobacter</taxon>
    </lineage>
</organism>
<evidence type="ECO:0000255" key="1">
    <source>
        <dbReference type="HAMAP-Rule" id="MF_01307"/>
    </source>
</evidence>
<evidence type="ECO:0000305" key="2"/>
<gene>
    <name evidence="1" type="primary">rpsE</name>
    <name type="ordered locus">Teth514_0884</name>
</gene>
<name>RS5_THEPX</name>
<reference key="1">
    <citation type="submission" date="2008-01" db="EMBL/GenBank/DDBJ databases">
        <title>Complete sequence of Thermoanaerobacter sp. X514.</title>
        <authorList>
            <consortium name="US DOE Joint Genome Institute"/>
            <person name="Copeland A."/>
            <person name="Lucas S."/>
            <person name="Lapidus A."/>
            <person name="Barry K."/>
            <person name="Glavina del Rio T."/>
            <person name="Dalin E."/>
            <person name="Tice H."/>
            <person name="Pitluck S."/>
            <person name="Bruce D."/>
            <person name="Goodwin L."/>
            <person name="Saunders E."/>
            <person name="Brettin T."/>
            <person name="Detter J.C."/>
            <person name="Han C."/>
            <person name="Schmutz J."/>
            <person name="Larimer F."/>
            <person name="Land M."/>
            <person name="Hauser L."/>
            <person name="Kyrpides N."/>
            <person name="Kim E."/>
            <person name="Hemme C."/>
            <person name="Fields M.W."/>
            <person name="He Z."/>
            <person name="Zhou J."/>
            <person name="Richardson P."/>
        </authorList>
    </citation>
    <scope>NUCLEOTIDE SEQUENCE [LARGE SCALE GENOMIC DNA]</scope>
    <source>
        <strain>X514</strain>
    </source>
</reference>
<accession>B0K5R0</accession>
<comment type="function">
    <text evidence="1">With S4 and S12 plays an important role in translational accuracy.</text>
</comment>
<comment type="function">
    <text evidence="1">Located at the back of the 30S subunit body where it stabilizes the conformation of the head with respect to the body.</text>
</comment>
<comment type="subunit">
    <text evidence="1">Part of the 30S ribosomal subunit. Contacts proteins S4 and S8.</text>
</comment>
<comment type="domain">
    <text>The N-terminal domain interacts with the head of the 30S subunit; the C-terminal domain interacts with the body and contacts protein S4. The interaction surface between S4 and S5 is involved in control of translational fidelity.</text>
</comment>
<comment type="similarity">
    <text evidence="1">Belongs to the universal ribosomal protein uS5 family.</text>
</comment>
<dbReference type="EMBL" id="CP000923">
    <property type="protein sequence ID" value="ABY92186.1"/>
    <property type="molecule type" value="Genomic_DNA"/>
</dbReference>
<dbReference type="RefSeq" id="WP_003868577.1">
    <property type="nucleotide sequence ID" value="NC_010320.1"/>
</dbReference>
<dbReference type="SMR" id="B0K5R0"/>
<dbReference type="KEGG" id="tex:Teth514_0884"/>
<dbReference type="HOGENOM" id="CLU_065898_2_2_9"/>
<dbReference type="Proteomes" id="UP000002155">
    <property type="component" value="Chromosome"/>
</dbReference>
<dbReference type="GO" id="GO:0015935">
    <property type="term" value="C:small ribosomal subunit"/>
    <property type="evidence" value="ECO:0007669"/>
    <property type="project" value="InterPro"/>
</dbReference>
<dbReference type="GO" id="GO:0019843">
    <property type="term" value="F:rRNA binding"/>
    <property type="evidence" value="ECO:0007669"/>
    <property type="project" value="UniProtKB-UniRule"/>
</dbReference>
<dbReference type="GO" id="GO:0003735">
    <property type="term" value="F:structural constituent of ribosome"/>
    <property type="evidence" value="ECO:0007669"/>
    <property type="project" value="InterPro"/>
</dbReference>
<dbReference type="GO" id="GO:0006412">
    <property type="term" value="P:translation"/>
    <property type="evidence" value="ECO:0007669"/>
    <property type="project" value="UniProtKB-UniRule"/>
</dbReference>
<dbReference type="FunFam" id="3.30.160.20:FF:000001">
    <property type="entry name" value="30S ribosomal protein S5"/>
    <property type="match status" value="1"/>
</dbReference>
<dbReference type="FunFam" id="3.30.230.10:FF:000002">
    <property type="entry name" value="30S ribosomal protein S5"/>
    <property type="match status" value="1"/>
</dbReference>
<dbReference type="Gene3D" id="3.30.160.20">
    <property type="match status" value="1"/>
</dbReference>
<dbReference type="Gene3D" id="3.30.230.10">
    <property type="match status" value="1"/>
</dbReference>
<dbReference type="HAMAP" id="MF_01307_B">
    <property type="entry name" value="Ribosomal_uS5_B"/>
    <property type="match status" value="1"/>
</dbReference>
<dbReference type="InterPro" id="IPR020568">
    <property type="entry name" value="Ribosomal_Su5_D2-typ_SF"/>
</dbReference>
<dbReference type="InterPro" id="IPR000851">
    <property type="entry name" value="Ribosomal_uS5"/>
</dbReference>
<dbReference type="InterPro" id="IPR005712">
    <property type="entry name" value="Ribosomal_uS5_bac-type"/>
</dbReference>
<dbReference type="InterPro" id="IPR005324">
    <property type="entry name" value="Ribosomal_uS5_C"/>
</dbReference>
<dbReference type="InterPro" id="IPR013810">
    <property type="entry name" value="Ribosomal_uS5_N"/>
</dbReference>
<dbReference type="InterPro" id="IPR018192">
    <property type="entry name" value="Ribosomal_uS5_N_CS"/>
</dbReference>
<dbReference type="InterPro" id="IPR014721">
    <property type="entry name" value="Ribsml_uS5_D2-typ_fold_subgr"/>
</dbReference>
<dbReference type="NCBIfam" id="TIGR01021">
    <property type="entry name" value="rpsE_bact"/>
    <property type="match status" value="1"/>
</dbReference>
<dbReference type="PANTHER" id="PTHR48277">
    <property type="entry name" value="MITOCHONDRIAL RIBOSOMAL PROTEIN S5"/>
    <property type="match status" value="1"/>
</dbReference>
<dbReference type="PANTHER" id="PTHR48277:SF1">
    <property type="entry name" value="MITOCHONDRIAL RIBOSOMAL PROTEIN S5"/>
    <property type="match status" value="1"/>
</dbReference>
<dbReference type="Pfam" id="PF00333">
    <property type="entry name" value="Ribosomal_S5"/>
    <property type="match status" value="1"/>
</dbReference>
<dbReference type="Pfam" id="PF03719">
    <property type="entry name" value="Ribosomal_S5_C"/>
    <property type="match status" value="1"/>
</dbReference>
<dbReference type="SUPFAM" id="SSF54768">
    <property type="entry name" value="dsRNA-binding domain-like"/>
    <property type="match status" value="1"/>
</dbReference>
<dbReference type="SUPFAM" id="SSF54211">
    <property type="entry name" value="Ribosomal protein S5 domain 2-like"/>
    <property type="match status" value="1"/>
</dbReference>
<dbReference type="PROSITE" id="PS00585">
    <property type="entry name" value="RIBOSOMAL_S5"/>
    <property type="match status" value="1"/>
</dbReference>
<dbReference type="PROSITE" id="PS50881">
    <property type="entry name" value="S5_DSRBD"/>
    <property type="match status" value="1"/>
</dbReference>
<proteinExistence type="inferred from homology"/>
<keyword id="KW-0687">Ribonucleoprotein</keyword>
<keyword id="KW-0689">Ribosomal protein</keyword>
<keyword id="KW-0694">RNA-binding</keyword>
<keyword id="KW-0699">rRNA-binding</keyword>